<reference key="1">
    <citation type="journal article" date="2004" name="Nat. Genet.">
        <title>Evidence in the Legionella pneumophila genome for exploitation of host cell functions and high genome plasticity.</title>
        <authorList>
            <person name="Cazalet C."/>
            <person name="Rusniok C."/>
            <person name="Brueggemann H."/>
            <person name="Zidane N."/>
            <person name="Magnier A."/>
            <person name="Ma L."/>
            <person name="Tichit M."/>
            <person name="Jarraud S."/>
            <person name="Bouchier C."/>
            <person name="Vandenesch F."/>
            <person name="Kunst F."/>
            <person name="Etienne J."/>
            <person name="Glaser P."/>
            <person name="Buchrieser C."/>
        </authorList>
    </citation>
    <scope>NUCLEOTIDE SEQUENCE [LARGE SCALE GENOMIC DNA]</scope>
    <source>
        <strain>Paris</strain>
    </source>
</reference>
<feature type="chain" id="PRO_0000225734" description="Large ribosomal subunit protein bL32">
    <location>
        <begin position="1"/>
        <end position="63"/>
    </location>
</feature>
<feature type="region of interest" description="Disordered" evidence="2">
    <location>
        <begin position="1"/>
        <end position="45"/>
    </location>
</feature>
<feature type="compositionally biased region" description="Basic residues" evidence="2">
    <location>
        <begin position="7"/>
        <end position="16"/>
    </location>
</feature>
<feature type="compositionally biased region" description="Polar residues" evidence="2">
    <location>
        <begin position="25"/>
        <end position="35"/>
    </location>
</feature>
<evidence type="ECO:0000255" key="1">
    <source>
        <dbReference type="HAMAP-Rule" id="MF_00340"/>
    </source>
</evidence>
<evidence type="ECO:0000256" key="2">
    <source>
        <dbReference type="SAM" id="MobiDB-lite"/>
    </source>
</evidence>
<evidence type="ECO:0000305" key="3"/>
<dbReference type="EMBL" id="CR628336">
    <property type="protein sequence ID" value="CAH12497.1"/>
    <property type="molecule type" value="Genomic_DNA"/>
</dbReference>
<dbReference type="RefSeq" id="WP_010947121.1">
    <property type="nucleotide sequence ID" value="NC_006368.1"/>
</dbReference>
<dbReference type="SMR" id="Q5X5H4"/>
<dbReference type="GeneID" id="57035381"/>
<dbReference type="KEGG" id="lpp:lpp1346"/>
<dbReference type="LegioList" id="lpp1346"/>
<dbReference type="HOGENOM" id="CLU_129084_2_1_6"/>
<dbReference type="GO" id="GO:0015934">
    <property type="term" value="C:large ribosomal subunit"/>
    <property type="evidence" value="ECO:0007669"/>
    <property type="project" value="InterPro"/>
</dbReference>
<dbReference type="GO" id="GO:0003735">
    <property type="term" value="F:structural constituent of ribosome"/>
    <property type="evidence" value="ECO:0007669"/>
    <property type="project" value="InterPro"/>
</dbReference>
<dbReference type="GO" id="GO:0006412">
    <property type="term" value="P:translation"/>
    <property type="evidence" value="ECO:0007669"/>
    <property type="project" value="UniProtKB-UniRule"/>
</dbReference>
<dbReference type="HAMAP" id="MF_00340">
    <property type="entry name" value="Ribosomal_bL32"/>
    <property type="match status" value="1"/>
</dbReference>
<dbReference type="InterPro" id="IPR002677">
    <property type="entry name" value="Ribosomal_bL32"/>
</dbReference>
<dbReference type="InterPro" id="IPR044957">
    <property type="entry name" value="Ribosomal_bL32_bact"/>
</dbReference>
<dbReference type="InterPro" id="IPR011332">
    <property type="entry name" value="Ribosomal_zn-bd"/>
</dbReference>
<dbReference type="NCBIfam" id="TIGR01031">
    <property type="entry name" value="rpmF_bact"/>
    <property type="match status" value="1"/>
</dbReference>
<dbReference type="PANTHER" id="PTHR35534">
    <property type="entry name" value="50S RIBOSOMAL PROTEIN L32"/>
    <property type="match status" value="1"/>
</dbReference>
<dbReference type="PANTHER" id="PTHR35534:SF1">
    <property type="entry name" value="LARGE RIBOSOMAL SUBUNIT PROTEIN BL32"/>
    <property type="match status" value="1"/>
</dbReference>
<dbReference type="Pfam" id="PF01783">
    <property type="entry name" value="Ribosomal_L32p"/>
    <property type="match status" value="1"/>
</dbReference>
<dbReference type="SUPFAM" id="SSF57829">
    <property type="entry name" value="Zn-binding ribosomal proteins"/>
    <property type="match status" value="1"/>
</dbReference>
<sequence length="63" mass="7341">MAVQQNKKSRSRRDMRRSHDALTKPTLSVDPTTGETHLRHHMTPDGYYRGKKIIDAETAYEQE</sequence>
<protein>
    <recommendedName>
        <fullName evidence="1">Large ribosomal subunit protein bL32</fullName>
    </recommendedName>
    <alternativeName>
        <fullName evidence="3">50S ribosomal protein L32</fullName>
    </alternativeName>
</protein>
<organism>
    <name type="scientific">Legionella pneumophila (strain Paris)</name>
    <dbReference type="NCBI Taxonomy" id="297246"/>
    <lineage>
        <taxon>Bacteria</taxon>
        <taxon>Pseudomonadati</taxon>
        <taxon>Pseudomonadota</taxon>
        <taxon>Gammaproteobacteria</taxon>
        <taxon>Legionellales</taxon>
        <taxon>Legionellaceae</taxon>
        <taxon>Legionella</taxon>
    </lineage>
</organism>
<comment type="similarity">
    <text evidence="1">Belongs to the bacterial ribosomal protein bL32 family.</text>
</comment>
<accession>Q5X5H4</accession>
<keyword id="KW-0687">Ribonucleoprotein</keyword>
<keyword id="KW-0689">Ribosomal protein</keyword>
<name>RL32_LEGPA</name>
<gene>
    <name evidence="1" type="primary">rpmF</name>
    <name type="ordered locus">lpp1346</name>
</gene>
<proteinExistence type="inferred from homology"/>